<protein>
    <recommendedName>
        <fullName>Probable nitrate transporter NarT</fullName>
    </recommendedName>
</protein>
<reference key="1">
    <citation type="journal article" date="2004" name="Proc. Natl. Acad. Sci. U.S.A.">
        <title>Complete genomes of two clinical Staphylococcus aureus strains: evidence for the rapid evolution of virulence and drug resistance.</title>
        <authorList>
            <person name="Holden M.T.G."/>
            <person name="Feil E.J."/>
            <person name="Lindsay J.A."/>
            <person name="Peacock S.J."/>
            <person name="Day N.P.J."/>
            <person name="Enright M.C."/>
            <person name="Foster T.J."/>
            <person name="Moore C.E."/>
            <person name="Hurst L."/>
            <person name="Atkin R."/>
            <person name="Barron A."/>
            <person name="Bason N."/>
            <person name="Bentley S.D."/>
            <person name="Chillingworth C."/>
            <person name="Chillingworth T."/>
            <person name="Churcher C."/>
            <person name="Clark L."/>
            <person name="Corton C."/>
            <person name="Cronin A."/>
            <person name="Doggett J."/>
            <person name="Dowd L."/>
            <person name="Feltwell T."/>
            <person name="Hance Z."/>
            <person name="Harris B."/>
            <person name="Hauser H."/>
            <person name="Holroyd S."/>
            <person name="Jagels K."/>
            <person name="James K.D."/>
            <person name="Lennard N."/>
            <person name="Line A."/>
            <person name="Mayes R."/>
            <person name="Moule S."/>
            <person name="Mungall K."/>
            <person name="Ormond D."/>
            <person name="Quail M.A."/>
            <person name="Rabbinowitsch E."/>
            <person name="Rutherford K.M."/>
            <person name="Sanders M."/>
            <person name="Sharp S."/>
            <person name="Simmonds M."/>
            <person name="Stevens K."/>
            <person name="Whitehead S."/>
            <person name="Barrell B.G."/>
            <person name="Spratt B.G."/>
            <person name="Parkhill J."/>
        </authorList>
    </citation>
    <scope>NUCLEOTIDE SEQUENCE [LARGE SCALE GENOMIC DNA]</scope>
    <source>
        <strain>MSSA476</strain>
    </source>
</reference>
<accession>Q6G6T3</accession>
<sequence length="389" mass="42148">MYKTKGGFQLTLQTLSLVVGFMAWSIIAPLMPFIKQDVNVTEGQISIILAIPVILGSVLRVPFGYLTNIVGAKWVFFTSFIVLLFPIFFLSQAQTPGMLMASGFFLGVGGAIFSVGVTSVPKYFPKEKVGLANGIYGMGNIGTAVSSFLAPPIAGIIGWQTTVRSYLIIIALFALIMFIFGDTQERKIKVPLMAQMKTLSKNYKLYYLSYWYFITFGAFVAFGIFLPNYLVNHFGIDKVDAGIRSGVFIALATFLRPIGGILGDKFNAVKVLMIDFVVMIIGAIILGISDHIALFTVGCLTISICAGIGNGLIFKLVPSYFLNEAGSANGIVSMMGGLGGFFPPLVITYVANLTGSSHLAFIFLAVFGCIALFTMRHLYQKEYGSLKNG</sequence>
<comment type="function">
    <text evidence="1">Probably required for nitrate uptake under anoxic conditions. Also possibly involved in excretion of nitrite produced by the dissimilatory reduction of nitrate (By similarity).</text>
</comment>
<comment type="subcellular location">
    <subcellularLocation>
        <location evidence="3">Cell membrane</location>
        <topology evidence="3">Multi-pass membrane protein</topology>
    </subcellularLocation>
</comment>
<comment type="induction">
    <text evidence="1">Positively regulated by the two-component system NreB/NreC.</text>
</comment>
<comment type="similarity">
    <text evidence="3">Belongs to the major facilitator superfamily. Nitrate/nitrite porter (TC 2.A.1.8) family.</text>
</comment>
<feature type="chain" id="PRO_0000349391" description="Probable nitrate transporter NarT">
    <location>
        <begin position="1"/>
        <end position="389"/>
    </location>
</feature>
<feature type="transmembrane region" description="Helical" evidence="2">
    <location>
        <begin position="14"/>
        <end position="34"/>
    </location>
</feature>
<feature type="transmembrane region" description="Helical" evidence="2">
    <location>
        <begin position="45"/>
        <end position="65"/>
    </location>
</feature>
<feature type="transmembrane region" description="Helical" evidence="2">
    <location>
        <begin position="69"/>
        <end position="89"/>
    </location>
</feature>
<feature type="transmembrane region" description="Helical" evidence="2">
    <location>
        <begin position="97"/>
        <end position="117"/>
    </location>
</feature>
<feature type="transmembrane region" description="Helical" evidence="2">
    <location>
        <begin position="139"/>
        <end position="159"/>
    </location>
</feature>
<feature type="transmembrane region" description="Helical" evidence="2">
    <location>
        <begin position="161"/>
        <end position="181"/>
    </location>
</feature>
<feature type="transmembrane region" description="Helical" evidence="2">
    <location>
        <begin position="211"/>
        <end position="231"/>
    </location>
</feature>
<feature type="transmembrane region" description="Helical" evidence="2">
    <location>
        <begin position="246"/>
        <end position="266"/>
    </location>
</feature>
<feature type="transmembrane region" description="Helical" evidence="2">
    <location>
        <begin position="268"/>
        <end position="288"/>
    </location>
</feature>
<feature type="transmembrane region" description="Helical" evidence="2">
    <location>
        <begin position="294"/>
        <end position="314"/>
    </location>
</feature>
<feature type="transmembrane region" description="Helical" evidence="2">
    <location>
        <begin position="331"/>
        <end position="351"/>
    </location>
</feature>
<feature type="transmembrane region" description="Helical" evidence="2">
    <location>
        <begin position="353"/>
        <end position="373"/>
    </location>
</feature>
<dbReference type="EMBL" id="BX571857">
    <property type="protein sequence ID" value="CAG44091.1"/>
    <property type="molecule type" value="Genomic_DNA"/>
</dbReference>
<dbReference type="RefSeq" id="WP_000278558.1">
    <property type="nucleotide sequence ID" value="NC_002953.3"/>
</dbReference>
<dbReference type="SMR" id="Q6G6T3"/>
<dbReference type="KEGG" id="sas:SAS2278"/>
<dbReference type="HOGENOM" id="CLU_001265_14_0_9"/>
<dbReference type="GO" id="GO:0005886">
    <property type="term" value="C:plasma membrane"/>
    <property type="evidence" value="ECO:0007669"/>
    <property type="project" value="UniProtKB-SubCell"/>
</dbReference>
<dbReference type="GO" id="GO:0015112">
    <property type="term" value="F:nitrate transmembrane transporter activity"/>
    <property type="evidence" value="ECO:0007669"/>
    <property type="project" value="InterPro"/>
</dbReference>
<dbReference type="GO" id="GO:0042128">
    <property type="term" value="P:nitrate assimilation"/>
    <property type="evidence" value="ECO:0007669"/>
    <property type="project" value="UniProtKB-KW"/>
</dbReference>
<dbReference type="CDD" id="cd17341">
    <property type="entry name" value="MFS_NRT2_like"/>
    <property type="match status" value="1"/>
</dbReference>
<dbReference type="Gene3D" id="1.20.1250.20">
    <property type="entry name" value="MFS general substrate transporter like domains"/>
    <property type="match status" value="2"/>
</dbReference>
<dbReference type="InterPro" id="IPR011701">
    <property type="entry name" value="MFS"/>
</dbReference>
<dbReference type="InterPro" id="IPR020846">
    <property type="entry name" value="MFS_dom"/>
</dbReference>
<dbReference type="InterPro" id="IPR036259">
    <property type="entry name" value="MFS_trans_sf"/>
</dbReference>
<dbReference type="InterPro" id="IPR044772">
    <property type="entry name" value="NO3_transporter"/>
</dbReference>
<dbReference type="PANTHER" id="PTHR23515">
    <property type="entry name" value="HIGH-AFFINITY NITRATE TRANSPORTER 2.3"/>
    <property type="match status" value="1"/>
</dbReference>
<dbReference type="Pfam" id="PF07690">
    <property type="entry name" value="MFS_1"/>
    <property type="match status" value="1"/>
</dbReference>
<dbReference type="SUPFAM" id="SSF103473">
    <property type="entry name" value="MFS general substrate transporter"/>
    <property type="match status" value="1"/>
</dbReference>
<dbReference type="PROSITE" id="PS50850">
    <property type="entry name" value="MFS"/>
    <property type="match status" value="1"/>
</dbReference>
<keyword id="KW-1003">Cell membrane</keyword>
<keyword id="KW-0472">Membrane</keyword>
<keyword id="KW-0534">Nitrate assimilation</keyword>
<keyword id="KW-0812">Transmembrane</keyword>
<keyword id="KW-1133">Transmembrane helix</keyword>
<keyword id="KW-0813">Transport</keyword>
<name>NART_STAAS</name>
<evidence type="ECO:0000250" key="1"/>
<evidence type="ECO:0000255" key="2"/>
<evidence type="ECO:0000305" key="3"/>
<organism>
    <name type="scientific">Staphylococcus aureus (strain MSSA476)</name>
    <dbReference type="NCBI Taxonomy" id="282459"/>
    <lineage>
        <taxon>Bacteria</taxon>
        <taxon>Bacillati</taxon>
        <taxon>Bacillota</taxon>
        <taxon>Bacilli</taxon>
        <taxon>Bacillales</taxon>
        <taxon>Staphylococcaceae</taxon>
        <taxon>Staphylococcus</taxon>
    </lineage>
</organism>
<gene>
    <name type="primary">narT</name>
    <name type="synonym">narK</name>
    <name type="ordered locus">SAS2278</name>
</gene>
<proteinExistence type="inferred from homology"/>